<accession>Q21XX0</accession>
<reference key="1">
    <citation type="submission" date="2006-02" db="EMBL/GenBank/DDBJ databases">
        <title>Complete sequence of chromosome of Rhodoferax ferrireducens DSM 15236.</title>
        <authorList>
            <person name="Copeland A."/>
            <person name="Lucas S."/>
            <person name="Lapidus A."/>
            <person name="Barry K."/>
            <person name="Detter J.C."/>
            <person name="Glavina del Rio T."/>
            <person name="Hammon N."/>
            <person name="Israni S."/>
            <person name="Pitluck S."/>
            <person name="Brettin T."/>
            <person name="Bruce D."/>
            <person name="Han C."/>
            <person name="Tapia R."/>
            <person name="Gilna P."/>
            <person name="Kiss H."/>
            <person name="Schmutz J."/>
            <person name="Larimer F."/>
            <person name="Land M."/>
            <person name="Kyrpides N."/>
            <person name="Ivanova N."/>
            <person name="Richardson P."/>
        </authorList>
    </citation>
    <scope>NUCLEOTIDE SEQUENCE [LARGE SCALE GENOMIC DNA]</scope>
    <source>
        <strain>ATCC BAA-621 / DSM 15236 / T118</strain>
    </source>
</reference>
<feature type="chain" id="PRO_0000258991" description="Nucleotide-binding protein Rfer_1653">
    <location>
        <begin position="1"/>
        <end position="301"/>
    </location>
</feature>
<feature type="binding site" evidence="1">
    <location>
        <begin position="15"/>
        <end position="22"/>
    </location>
    <ligand>
        <name>ATP</name>
        <dbReference type="ChEBI" id="CHEBI:30616"/>
    </ligand>
</feature>
<feature type="binding site" evidence="1">
    <location>
        <begin position="64"/>
        <end position="67"/>
    </location>
    <ligand>
        <name>GTP</name>
        <dbReference type="ChEBI" id="CHEBI:37565"/>
    </ligand>
</feature>
<organism>
    <name type="scientific">Albidiferax ferrireducens (strain ATCC BAA-621 / DSM 15236 / T118)</name>
    <name type="common">Rhodoferax ferrireducens</name>
    <dbReference type="NCBI Taxonomy" id="338969"/>
    <lineage>
        <taxon>Bacteria</taxon>
        <taxon>Pseudomonadati</taxon>
        <taxon>Pseudomonadota</taxon>
        <taxon>Betaproteobacteria</taxon>
        <taxon>Burkholderiales</taxon>
        <taxon>Comamonadaceae</taxon>
        <taxon>Rhodoferax</taxon>
    </lineage>
</organism>
<name>Y1653_ALBFT</name>
<sequence>MKSEADNLQIVLITGMSGSGKSVALHALEDAGFFCVDNLPPELFLPFVALQKMHQTKRVAIAMDVRTASSLPLVPEQLATLQAQGVMVKSLFLDATTGTLVRRYSETRRKHPLSQAASEHSPLDQRRALVDAIELERELLADLRENAHVIDTSIIRPSKLQGYVKSLISTASEQLTLVFESFAFKRGIPGDADYVFDVRMLPNPHYEPELRQLTGRDLPVADFLKEQADVALMLEHIQKFLNQWLGALARDHRSYVTVAIGCTGGQHRSVYLVEKLAELFGDQWMTLKRHRELEASPLTLE</sequence>
<proteinExistence type="inferred from homology"/>
<dbReference type="EMBL" id="CP000267">
    <property type="protein sequence ID" value="ABD69383.1"/>
    <property type="molecule type" value="Genomic_DNA"/>
</dbReference>
<dbReference type="RefSeq" id="WP_011463951.1">
    <property type="nucleotide sequence ID" value="NC_007908.1"/>
</dbReference>
<dbReference type="SMR" id="Q21XX0"/>
<dbReference type="STRING" id="338969.Rfer_1653"/>
<dbReference type="KEGG" id="rfr:Rfer_1653"/>
<dbReference type="eggNOG" id="COG1660">
    <property type="taxonomic scope" value="Bacteria"/>
</dbReference>
<dbReference type="HOGENOM" id="CLU_059558_1_1_4"/>
<dbReference type="OrthoDB" id="9784461at2"/>
<dbReference type="Proteomes" id="UP000008332">
    <property type="component" value="Chromosome"/>
</dbReference>
<dbReference type="GO" id="GO:0005524">
    <property type="term" value="F:ATP binding"/>
    <property type="evidence" value="ECO:0007669"/>
    <property type="project" value="UniProtKB-UniRule"/>
</dbReference>
<dbReference type="GO" id="GO:0005525">
    <property type="term" value="F:GTP binding"/>
    <property type="evidence" value="ECO:0007669"/>
    <property type="project" value="UniProtKB-UniRule"/>
</dbReference>
<dbReference type="HAMAP" id="MF_00636">
    <property type="entry name" value="RapZ_like"/>
    <property type="match status" value="1"/>
</dbReference>
<dbReference type="InterPro" id="IPR027417">
    <property type="entry name" value="P-loop_NTPase"/>
</dbReference>
<dbReference type="InterPro" id="IPR005337">
    <property type="entry name" value="RapZ-like"/>
</dbReference>
<dbReference type="InterPro" id="IPR053930">
    <property type="entry name" value="RapZ-like_N"/>
</dbReference>
<dbReference type="InterPro" id="IPR053931">
    <property type="entry name" value="RapZ_C"/>
</dbReference>
<dbReference type="NCBIfam" id="NF003828">
    <property type="entry name" value="PRK05416.1"/>
    <property type="match status" value="1"/>
</dbReference>
<dbReference type="PANTHER" id="PTHR30448">
    <property type="entry name" value="RNASE ADAPTER PROTEIN RAPZ"/>
    <property type="match status" value="1"/>
</dbReference>
<dbReference type="PANTHER" id="PTHR30448:SF0">
    <property type="entry name" value="RNASE ADAPTER PROTEIN RAPZ"/>
    <property type="match status" value="1"/>
</dbReference>
<dbReference type="Pfam" id="PF22740">
    <property type="entry name" value="PapZ_C"/>
    <property type="match status" value="1"/>
</dbReference>
<dbReference type="Pfam" id="PF03668">
    <property type="entry name" value="RapZ-like_N"/>
    <property type="match status" value="1"/>
</dbReference>
<dbReference type="PIRSF" id="PIRSF005052">
    <property type="entry name" value="P-loopkin"/>
    <property type="match status" value="1"/>
</dbReference>
<dbReference type="SUPFAM" id="SSF52540">
    <property type="entry name" value="P-loop containing nucleoside triphosphate hydrolases"/>
    <property type="match status" value="1"/>
</dbReference>
<gene>
    <name type="ordered locus">Rfer_1653</name>
</gene>
<protein>
    <recommendedName>
        <fullName evidence="1">Nucleotide-binding protein Rfer_1653</fullName>
    </recommendedName>
</protein>
<evidence type="ECO:0000255" key="1">
    <source>
        <dbReference type="HAMAP-Rule" id="MF_00636"/>
    </source>
</evidence>
<keyword id="KW-0067">ATP-binding</keyword>
<keyword id="KW-0342">GTP-binding</keyword>
<keyword id="KW-0547">Nucleotide-binding</keyword>
<keyword id="KW-1185">Reference proteome</keyword>
<comment type="function">
    <text evidence="1">Displays ATPase and GTPase activities.</text>
</comment>
<comment type="similarity">
    <text evidence="1">Belongs to the RapZ-like family.</text>
</comment>